<accession>A7ZVY8</accession>
<name>CAIB_ECOHS</name>
<gene>
    <name evidence="1" type="primary">caiB</name>
    <name type="ordered locus">EcHS_A0042</name>
</gene>
<feature type="chain" id="PRO_1000064339" description="L-carnitine CoA-transferase">
    <location>
        <begin position="1"/>
        <end position="405"/>
    </location>
</feature>
<feature type="active site" description="Nucleophile" evidence="1">
    <location>
        <position position="169"/>
    </location>
</feature>
<feature type="binding site" evidence="1">
    <location>
        <position position="97"/>
    </location>
    <ligand>
        <name>CoA</name>
        <dbReference type="ChEBI" id="CHEBI:57287"/>
    </ligand>
</feature>
<feature type="binding site" evidence="1">
    <location>
        <position position="104"/>
    </location>
    <ligand>
        <name>CoA</name>
        <dbReference type="ChEBI" id="CHEBI:57287"/>
    </ligand>
</feature>
<organism>
    <name type="scientific">Escherichia coli O9:H4 (strain HS)</name>
    <dbReference type="NCBI Taxonomy" id="331112"/>
    <lineage>
        <taxon>Bacteria</taxon>
        <taxon>Pseudomonadati</taxon>
        <taxon>Pseudomonadota</taxon>
        <taxon>Gammaproteobacteria</taxon>
        <taxon>Enterobacterales</taxon>
        <taxon>Enterobacteriaceae</taxon>
        <taxon>Escherichia</taxon>
    </lineage>
</organism>
<dbReference type="EC" id="2.8.3.21" evidence="1"/>
<dbReference type="EMBL" id="CP000802">
    <property type="protein sequence ID" value="ABV04442.1"/>
    <property type="molecule type" value="Genomic_DNA"/>
</dbReference>
<dbReference type="RefSeq" id="WP_000349932.1">
    <property type="nucleotide sequence ID" value="NC_009800.1"/>
</dbReference>
<dbReference type="SMR" id="A7ZVY8"/>
<dbReference type="GeneID" id="75169937"/>
<dbReference type="KEGG" id="ecx:EcHS_A0042"/>
<dbReference type="HOGENOM" id="CLU_033975_2_0_6"/>
<dbReference type="UniPathway" id="UPA00117"/>
<dbReference type="GO" id="GO:0005737">
    <property type="term" value="C:cytoplasm"/>
    <property type="evidence" value="ECO:0007669"/>
    <property type="project" value="UniProtKB-SubCell"/>
</dbReference>
<dbReference type="GO" id="GO:0008735">
    <property type="term" value="F:L-carnitine CoA-transferase activity"/>
    <property type="evidence" value="ECO:0007669"/>
    <property type="project" value="RHEA"/>
</dbReference>
<dbReference type="GO" id="GO:0009437">
    <property type="term" value="P:carnitine metabolic process"/>
    <property type="evidence" value="ECO:0007669"/>
    <property type="project" value="UniProtKB-UniRule"/>
</dbReference>
<dbReference type="FunFam" id="3.30.1540.10:FF:000001">
    <property type="entry name" value="L-carnitine CoA-transferase"/>
    <property type="match status" value="1"/>
</dbReference>
<dbReference type="Gene3D" id="3.40.50.10540">
    <property type="entry name" value="Crotonobetainyl-coa:carnitine coa-transferase, domain 1"/>
    <property type="match status" value="1"/>
</dbReference>
<dbReference type="Gene3D" id="3.30.1540.10">
    <property type="entry name" value="formyl-coa transferase, domain 3"/>
    <property type="match status" value="1"/>
</dbReference>
<dbReference type="HAMAP" id="MF_01050">
    <property type="entry name" value="CaiB"/>
    <property type="match status" value="1"/>
</dbReference>
<dbReference type="InterPro" id="IPR050509">
    <property type="entry name" value="CoA-transferase_III"/>
</dbReference>
<dbReference type="InterPro" id="IPR023452">
    <property type="entry name" value="CoA-Trfase_CaiB"/>
</dbReference>
<dbReference type="InterPro" id="IPR003673">
    <property type="entry name" value="CoA-Trfase_fam_III"/>
</dbReference>
<dbReference type="InterPro" id="IPR044855">
    <property type="entry name" value="CoA-Trfase_III_dom3_sf"/>
</dbReference>
<dbReference type="InterPro" id="IPR023606">
    <property type="entry name" value="CoA-Trfase_III_dom_1_sf"/>
</dbReference>
<dbReference type="NCBIfam" id="NF002914">
    <property type="entry name" value="PRK03525.1"/>
    <property type="match status" value="1"/>
</dbReference>
<dbReference type="PANTHER" id="PTHR48228:SF6">
    <property type="entry name" value="L-CARNITINE COA-TRANSFERASE"/>
    <property type="match status" value="1"/>
</dbReference>
<dbReference type="PANTHER" id="PTHR48228">
    <property type="entry name" value="SUCCINYL-COA--D-CITRAMALATE COA-TRANSFERASE"/>
    <property type="match status" value="1"/>
</dbReference>
<dbReference type="Pfam" id="PF02515">
    <property type="entry name" value="CoA_transf_3"/>
    <property type="match status" value="1"/>
</dbReference>
<dbReference type="SUPFAM" id="SSF89796">
    <property type="entry name" value="CoA-transferase family III (CaiB/BaiF)"/>
    <property type="match status" value="1"/>
</dbReference>
<protein>
    <recommendedName>
        <fullName evidence="1">L-carnitine CoA-transferase</fullName>
        <ecNumber evidence="1">2.8.3.21</ecNumber>
    </recommendedName>
    <alternativeName>
        <fullName evidence="1">Crotonobetainyl-CoA:carnitine CoA-transferase</fullName>
    </alternativeName>
</protein>
<reference key="1">
    <citation type="journal article" date="2008" name="J. Bacteriol.">
        <title>The pangenome structure of Escherichia coli: comparative genomic analysis of E. coli commensal and pathogenic isolates.</title>
        <authorList>
            <person name="Rasko D.A."/>
            <person name="Rosovitz M.J."/>
            <person name="Myers G.S.A."/>
            <person name="Mongodin E.F."/>
            <person name="Fricke W.F."/>
            <person name="Gajer P."/>
            <person name="Crabtree J."/>
            <person name="Sebaihia M."/>
            <person name="Thomson N.R."/>
            <person name="Chaudhuri R."/>
            <person name="Henderson I.R."/>
            <person name="Sperandio V."/>
            <person name="Ravel J."/>
        </authorList>
    </citation>
    <scope>NUCLEOTIDE SEQUENCE [LARGE SCALE GENOMIC DNA]</scope>
    <source>
        <strain>HS</strain>
    </source>
</reference>
<evidence type="ECO:0000255" key="1">
    <source>
        <dbReference type="HAMAP-Rule" id="MF_01050"/>
    </source>
</evidence>
<sequence length="405" mass="45097">MDHLPMPKFGPLAGLRVVFSGIEIAGPFAGQMFAEWGAEVIWIENVAWADTIRVQPNYPQLSRRNLHALSLNIFKDEGREAFLKLMETTDIFIEASKGPAFARRGITDEVLWQHNPKLVIAHLSGFGQYGTEEYTNLPAYNTIAQAFSGYLIQNGDVDQPMPAFPYTADYFSGLTATTAALAALHKVRETGKGESIDIAMYEVMLRMGQYFMMDYFNGGEMCPRMSKGKDPYYAGCGLYKCADGYIVMELVGITQIEECFKDIGLAHLLGTPEIPEGTQLIHRIECPYGPLVEEKLDAWLAAHTIAEVKERFAELNIACAKVLTVPELESNPQYVARESITQWQTMDGRTCKGPNIMPKFKNNPGQIWRGMPSHGMDTAAILKNIGYSENDIQELVSKGLAKVED</sequence>
<keyword id="KW-0963">Cytoplasm</keyword>
<keyword id="KW-0808">Transferase</keyword>
<proteinExistence type="inferred from homology"/>
<comment type="function">
    <text evidence="1">Catalyzes the reversible transfer of the CoA moiety from gamma-butyrobetainyl-CoA to L-carnitine to generate L-carnitinyl-CoA and gamma-butyrobetaine. Is also able to catalyze the reversible transfer of the CoA moiety from gamma-butyrobetainyl-CoA or L-carnitinyl-CoA to crotonobetaine to generate crotonobetainyl-CoA.</text>
</comment>
<comment type="catalytic activity">
    <reaction evidence="1">
        <text>crotonobetainyl-CoA + (R)-carnitine = crotonobetaine + (R)-carnitinyl-CoA</text>
        <dbReference type="Rhea" id="RHEA:28526"/>
        <dbReference type="ChEBI" id="CHEBI:16347"/>
        <dbReference type="ChEBI" id="CHEBI:17237"/>
        <dbReference type="ChEBI" id="CHEBI:60932"/>
        <dbReference type="ChEBI" id="CHEBI:60933"/>
        <dbReference type="EC" id="2.8.3.21"/>
    </reaction>
</comment>
<comment type="catalytic activity">
    <reaction evidence="1">
        <text>4-(trimethylamino)butanoyl-CoA + (R)-carnitine = (R)-carnitinyl-CoA + 4-(trimethylamino)butanoate</text>
        <dbReference type="Rhea" id="RHEA:28418"/>
        <dbReference type="ChEBI" id="CHEBI:16244"/>
        <dbReference type="ChEBI" id="CHEBI:16347"/>
        <dbReference type="ChEBI" id="CHEBI:60932"/>
        <dbReference type="ChEBI" id="CHEBI:61513"/>
        <dbReference type="EC" id="2.8.3.21"/>
    </reaction>
</comment>
<comment type="pathway">
    <text evidence="1">Amine and polyamine metabolism; carnitine metabolism.</text>
</comment>
<comment type="subunit">
    <text evidence="1">Homodimer.</text>
</comment>
<comment type="subcellular location">
    <subcellularLocation>
        <location evidence="1">Cytoplasm</location>
    </subcellularLocation>
</comment>
<comment type="similarity">
    <text evidence="1">Belongs to the CoA-transferase III family. CaiB subfamily.</text>
</comment>